<dbReference type="EC" id="6.3.5.-" evidence="1"/>
<dbReference type="EMBL" id="CP000255">
    <property type="protein sequence ID" value="ABD21047.1"/>
    <property type="molecule type" value="Genomic_DNA"/>
</dbReference>
<dbReference type="RefSeq" id="WP_000170162.1">
    <property type="nucleotide sequence ID" value="NZ_CP027476.1"/>
</dbReference>
<dbReference type="SMR" id="Q2FFJ4"/>
<dbReference type="GeneID" id="98346286"/>
<dbReference type="KEGG" id="saa:SAUSA300_1882"/>
<dbReference type="HOGENOM" id="CLU_105899_1_2_9"/>
<dbReference type="OMA" id="VTPMAMK"/>
<dbReference type="Proteomes" id="UP000001939">
    <property type="component" value="Chromosome"/>
</dbReference>
<dbReference type="GO" id="GO:0050566">
    <property type="term" value="F:asparaginyl-tRNA synthase (glutamine-hydrolyzing) activity"/>
    <property type="evidence" value="ECO:0007669"/>
    <property type="project" value="RHEA"/>
</dbReference>
<dbReference type="GO" id="GO:0005524">
    <property type="term" value="F:ATP binding"/>
    <property type="evidence" value="ECO:0007669"/>
    <property type="project" value="UniProtKB-KW"/>
</dbReference>
<dbReference type="GO" id="GO:0050567">
    <property type="term" value="F:glutaminyl-tRNA synthase (glutamine-hydrolyzing) activity"/>
    <property type="evidence" value="ECO:0007669"/>
    <property type="project" value="UniProtKB-UniRule"/>
</dbReference>
<dbReference type="GO" id="GO:0070681">
    <property type="term" value="P:glutaminyl-tRNAGln biosynthesis via transamidation"/>
    <property type="evidence" value="ECO:0007669"/>
    <property type="project" value="TreeGrafter"/>
</dbReference>
<dbReference type="GO" id="GO:0006450">
    <property type="term" value="P:regulation of translational fidelity"/>
    <property type="evidence" value="ECO:0007669"/>
    <property type="project" value="InterPro"/>
</dbReference>
<dbReference type="GO" id="GO:0006412">
    <property type="term" value="P:translation"/>
    <property type="evidence" value="ECO:0007669"/>
    <property type="project" value="UniProtKB-UniRule"/>
</dbReference>
<dbReference type="Gene3D" id="1.10.20.60">
    <property type="entry name" value="Glu-tRNAGln amidotransferase C subunit, N-terminal domain"/>
    <property type="match status" value="1"/>
</dbReference>
<dbReference type="HAMAP" id="MF_00122">
    <property type="entry name" value="GatC"/>
    <property type="match status" value="1"/>
</dbReference>
<dbReference type="InterPro" id="IPR036113">
    <property type="entry name" value="Asp/Glu-ADT_sf_sub_c"/>
</dbReference>
<dbReference type="InterPro" id="IPR003837">
    <property type="entry name" value="GatC"/>
</dbReference>
<dbReference type="NCBIfam" id="TIGR00135">
    <property type="entry name" value="gatC"/>
    <property type="match status" value="1"/>
</dbReference>
<dbReference type="PANTHER" id="PTHR15004">
    <property type="entry name" value="GLUTAMYL-TRNA(GLN) AMIDOTRANSFERASE SUBUNIT C, MITOCHONDRIAL"/>
    <property type="match status" value="1"/>
</dbReference>
<dbReference type="PANTHER" id="PTHR15004:SF0">
    <property type="entry name" value="GLUTAMYL-TRNA(GLN) AMIDOTRANSFERASE SUBUNIT C, MITOCHONDRIAL"/>
    <property type="match status" value="1"/>
</dbReference>
<dbReference type="Pfam" id="PF02686">
    <property type="entry name" value="GatC"/>
    <property type="match status" value="1"/>
</dbReference>
<dbReference type="SUPFAM" id="SSF141000">
    <property type="entry name" value="Glu-tRNAGln amidotransferase C subunit"/>
    <property type="match status" value="1"/>
</dbReference>
<name>GATC_STAA3</name>
<reference key="1">
    <citation type="journal article" date="2006" name="Lancet">
        <title>Complete genome sequence of USA300, an epidemic clone of community-acquired meticillin-resistant Staphylococcus aureus.</title>
        <authorList>
            <person name="Diep B.A."/>
            <person name="Gill S.R."/>
            <person name="Chang R.F."/>
            <person name="Phan T.H."/>
            <person name="Chen J.H."/>
            <person name="Davidson M.G."/>
            <person name="Lin F."/>
            <person name="Lin J."/>
            <person name="Carleton H.A."/>
            <person name="Mongodin E.F."/>
            <person name="Sensabaugh G.F."/>
            <person name="Perdreau-Remington F."/>
        </authorList>
    </citation>
    <scope>NUCLEOTIDE SEQUENCE [LARGE SCALE GENOMIC DNA]</scope>
    <source>
        <strain>USA300</strain>
    </source>
</reference>
<evidence type="ECO:0000255" key="1">
    <source>
        <dbReference type="HAMAP-Rule" id="MF_00122"/>
    </source>
</evidence>
<protein>
    <recommendedName>
        <fullName evidence="1">Aspartyl/glutamyl-tRNA(Asn/Gln) amidotransferase subunit C</fullName>
        <shortName evidence="1">Asp/Glu-ADT subunit C</shortName>
        <ecNumber evidence="1">6.3.5.-</ecNumber>
    </recommendedName>
</protein>
<comment type="function">
    <text evidence="1">Allows the formation of correctly charged Asn-tRNA(Asn) or Gln-tRNA(Gln) through the transamidation of misacylated Asp-tRNA(Asn) or Glu-tRNA(Gln) in organisms which lack either or both of asparaginyl-tRNA or glutaminyl-tRNA synthetases. The reaction takes place in the presence of glutamine and ATP through an activated phospho-Asp-tRNA(Asn) or phospho-Glu-tRNA(Gln).</text>
</comment>
<comment type="catalytic activity">
    <reaction evidence="1">
        <text>L-glutamyl-tRNA(Gln) + L-glutamine + ATP + H2O = L-glutaminyl-tRNA(Gln) + L-glutamate + ADP + phosphate + H(+)</text>
        <dbReference type="Rhea" id="RHEA:17521"/>
        <dbReference type="Rhea" id="RHEA-COMP:9681"/>
        <dbReference type="Rhea" id="RHEA-COMP:9684"/>
        <dbReference type="ChEBI" id="CHEBI:15377"/>
        <dbReference type="ChEBI" id="CHEBI:15378"/>
        <dbReference type="ChEBI" id="CHEBI:29985"/>
        <dbReference type="ChEBI" id="CHEBI:30616"/>
        <dbReference type="ChEBI" id="CHEBI:43474"/>
        <dbReference type="ChEBI" id="CHEBI:58359"/>
        <dbReference type="ChEBI" id="CHEBI:78520"/>
        <dbReference type="ChEBI" id="CHEBI:78521"/>
        <dbReference type="ChEBI" id="CHEBI:456216"/>
    </reaction>
</comment>
<comment type="catalytic activity">
    <reaction evidence="1">
        <text>L-aspartyl-tRNA(Asn) + L-glutamine + ATP + H2O = L-asparaginyl-tRNA(Asn) + L-glutamate + ADP + phosphate + 2 H(+)</text>
        <dbReference type="Rhea" id="RHEA:14513"/>
        <dbReference type="Rhea" id="RHEA-COMP:9674"/>
        <dbReference type="Rhea" id="RHEA-COMP:9677"/>
        <dbReference type="ChEBI" id="CHEBI:15377"/>
        <dbReference type="ChEBI" id="CHEBI:15378"/>
        <dbReference type="ChEBI" id="CHEBI:29985"/>
        <dbReference type="ChEBI" id="CHEBI:30616"/>
        <dbReference type="ChEBI" id="CHEBI:43474"/>
        <dbReference type="ChEBI" id="CHEBI:58359"/>
        <dbReference type="ChEBI" id="CHEBI:78515"/>
        <dbReference type="ChEBI" id="CHEBI:78516"/>
        <dbReference type="ChEBI" id="CHEBI:456216"/>
    </reaction>
</comment>
<comment type="subunit">
    <text evidence="1">Heterotrimer of A, B and C subunits.</text>
</comment>
<comment type="similarity">
    <text evidence="1">Belongs to the GatC family.</text>
</comment>
<proteinExistence type="inferred from homology"/>
<accession>Q2FFJ4</accession>
<gene>
    <name evidence="1" type="primary">gatC</name>
    <name type="ordered locus">SAUSA300_1882</name>
</gene>
<sequence length="100" mass="11268">MTKVTREEVEHIANLARLQISPEETEEMANTLESILDFAKQNDSADTEGVEPTYHVLDLQNVLREDKAIKGIPQELALKNAKETEDGQFKVPTIMNEEDA</sequence>
<organism>
    <name type="scientific">Staphylococcus aureus (strain USA300)</name>
    <dbReference type="NCBI Taxonomy" id="367830"/>
    <lineage>
        <taxon>Bacteria</taxon>
        <taxon>Bacillati</taxon>
        <taxon>Bacillota</taxon>
        <taxon>Bacilli</taxon>
        <taxon>Bacillales</taxon>
        <taxon>Staphylococcaceae</taxon>
        <taxon>Staphylococcus</taxon>
    </lineage>
</organism>
<keyword id="KW-0067">ATP-binding</keyword>
<keyword id="KW-0436">Ligase</keyword>
<keyword id="KW-0547">Nucleotide-binding</keyword>
<keyword id="KW-0648">Protein biosynthesis</keyword>
<feature type="chain" id="PRO_1000016215" description="Aspartyl/glutamyl-tRNA(Asn/Gln) amidotransferase subunit C">
    <location>
        <begin position="1"/>
        <end position="100"/>
    </location>
</feature>